<organism>
    <name type="scientific">Desulfatibacillum aliphaticivorans</name>
    <dbReference type="NCBI Taxonomy" id="218208"/>
    <lineage>
        <taxon>Bacteria</taxon>
        <taxon>Pseudomonadati</taxon>
        <taxon>Thermodesulfobacteriota</taxon>
        <taxon>Desulfobacteria</taxon>
        <taxon>Desulfobacterales</taxon>
        <taxon>Desulfatibacillaceae</taxon>
        <taxon>Desulfatibacillum</taxon>
    </lineage>
</organism>
<keyword id="KW-0067">ATP-binding</keyword>
<keyword id="KW-0547">Nucleotide-binding</keyword>
<keyword id="KW-0548">Nucleotidyltransferase</keyword>
<keyword id="KW-1185">Reference proteome</keyword>
<keyword id="KW-0808">Transferase</keyword>
<reference key="1">
    <citation type="journal article" date="2012" name="Environ. Microbiol.">
        <title>The genome sequence of Desulfatibacillum alkenivorans AK-01: a blueprint for anaerobic alkane oxidation.</title>
        <authorList>
            <person name="Callaghan A.V."/>
            <person name="Morris B.E."/>
            <person name="Pereira I.A."/>
            <person name="McInerney M.J."/>
            <person name="Austin R.N."/>
            <person name="Groves J.T."/>
            <person name="Kukor J.J."/>
            <person name="Suflita J.M."/>
            <person name="Young L.Y."/>
            <person name="Zylstra G.J."/>
            <person name="Wawrik B."/>
        </authorList>
    </citation>
    <scope>NUCLEOTIDE SEQUENCE [LARGE SCALE GENOMIC DNA]</scope>
    <source>
        <strain>AK-01</strain>
    </source>
</reference>
<name>SAT_DESAL</name>
<dbReference type="EC" id="2.7.7.4" evidence="1"/>
<dbReference type="EMBL" id="CP001322">
    <property type="protein sequence ID" value="ACL04138.1"/>
    <property type="molecule type" value="Genomic_DNA"/>
</dbReference>
<dbReference type="RefSeq" id="WP_015947212.1">
    <property type="nucleotide sequence ID" value="NC_011768.1"/>
</dbReference>
<dbReference type="SMR" id="B8FB52"/>
<dbReference type="KEGG" id="dal:Dalk_2445"/>
<dbReference type="eggNOG" id="COG2046">
    <property type="taxonomic scope" value="Bacteria"/>
</dbReference>
<dbReference type="HOGENOM" id="CLU_022950_1_1_7"/>
<dbReference type="UniPathway" id="UPA00140">
    <property type="reaction ID" value="UER00204"/>
</dbReference>
<dbReference type="Proteomes" id="UP000000739">
    <property type="component" value="Chromosome"/>
</dbReference>
<dbReference type="GO" id="GO:0005524">
    <property type="term" value="F:ATP binding"/>
    <property type="evidence" value="ECO:0007669"/>
    <property type="project" value="UniProtKB-KW"/>
</dbReference>
<dbReference type="GO" id="GO:0004781">
    <property type="term" value="F:sulfate adenylyltransferase (ATP) activity"/>
    <property type="evidence" value="ECO:0007669"/>
    <property type="project" value="UniProtKB-UniRule"/>
</dbReference>
<dbReference type="GO" id="GO:0070814">
    <property type="term" value="P:hydrogen sulfide biosynthetic process"/>
    <property type="evidence" value="ECO:0007669"/>
    <property type="project" value="UniProtKB-UniRule"/>
</dbReference>
<dbReference type="GO" id="GO:0000103">
    <property type="term" value="P:sulfate assimilation"/>
    <property type="evidence" value="ECO:0007669"/>
    <property type="project" value="UniProtKB-UniRule"/>
</dbReference>
<dbReference type="CDD" id="cd00517">
    <property type="entry name" value="ATPS"/>
    <property type="match status" value="1"/>
</dbReference>
<dbReference type="Gene3D" id="3.40.50.620">
    <property type="entry name" value="HUPs"/>
    <property type="match status" value="1"/>
</dbReference>
<dbReference type="Gene3D" id="3.10.400.10">
    <property type="entry name" value="Sulfate adenylyltransferase"/>
    <property type="match status" value="1"/>
</dbReference>
<dbReference type="HAMAP" id="MF_00066">
    <property type="entry name" value="Sulf_adenylyltr"/>
    <property type="match status" value="1"/>
</dbReference>
<dbReference type="InterPro" id="IPR025980">
    <property type="entry name" value="ATP-Sase_PUA-like_dom"/>
</dbReference>
<dbReference type="InterPro" id="IPR015947">
    <property type="entry name" value="PUA-like_sf"/>
</dbReference>
<dbReference type="InterPro" id="IPR014729">
    <property type="entry name" value="Rossmann-like_a/b/a_fold"/>
</dbReference>
<dbReference type="InterPro" id="IPR020792">
    <property type="entry name" value="SO4_adenylyltransferase_pro"/>
</dbReference>
<dbReference type="InterPro" id="IPR024951">
    <property type="entry name" value="Sulfurylase_cat_dom"/>
</dbReference>
<dbReference type="InterPro" id="IPR002650">
    <property type="entry name" value="Sulphate_adenylyltransferase"/>
</dbReference>
<dbReference type="NCBIfam" id="NF003166">
    <property type="entry name" value="PRK04149.1"/>
    <property type="match status" value="1"/>
</dbReference>
<dbReference type="NCBIfam" id="TIGR00339">
    <property type="entry name" value="sopT"/>
    <property type="match status" value="1"/>
</dbReference>
<dbReference type="PANTHER" id="PTHR43509">
    <property type="match status" value="1"/>
</dbReference>
<dbReference type="PANTHER" id="PTHR43509:SF1">
    <property type="entry name" value="SULFATE ADENYLYLTRANSFERASE"/>
    <property type="match status" value="1"/>
</dbReference>
<dbReference type="Pfam" id="PF01747">
    <property type="entry name" value="ATP-sulfurylase"/>
    <property type="match status" value="1"/>
</dbReference>
<dbReference type="Pfam" id="PF14306">
    <property type="entry name" value="PUA_2"/>
    <property type="match status" value="1"/>
</dbReference>
<dbReference type="SUPFAM" id="SSF52374">
    <property type="entry name" value="Nucleotidylyl transferase"/>
    <property type="match status" value="1"/>
</dbReference>
<dbReference type="SUPFAM" id="SSF88697">
    <property type="entry name" value="PUA domain-like"/>
    <property type="match status" value="1"/>
</dbReference>
<comment type="catalytic activity">
    <reaction evidence="1">
        <text>sulfate + ATP + H(+) = adenosine 5'-phosphosulfate + diphosphate</text>
        <dbReference type="Rhea" id="RHEA:18133"/>
        <dbReference type="ChEBI" id="CHEBI:15378"/>
        <dbReference type="ChEBI" id="CHEBI:16189"/>
        <dbReference type="ChEBI" id="CHEBI:30616"/>
        <dbReference type="ChEBI" id="CHEBI:33019"/>
        <dbReference type="ChEBI" id="CHEBI:58243"/>
        <dbReference type="EC" id="2.7.7.4"/>
    </reaction>
</comment>
<comment type="pathway">
    <text evidence="1">Sulfur metabolism; hydrogen sulfide biosynthesis; sulfite from sulfate: step 1/3.</text>
</comment>
<comment type="similarity">
    <text evidence="1">Belongs to the sulfate adenylyltransferase family.</text>
</comment>
<proteinExistence type="inferred from homology"/>
<protein>
    <recommendedName>
        <fullName evidence="1">Sulfate adenylyltransferase</fullName>
        <ecNumber evidence="1">2.7.7.4</ecNumber>
    </recommendedName>
    <alternativeName>
        <fullName evidence="1">ATP-sulfurylase</fullName>
    </alternativeName>
    <alternativeName>
        <fullName evidence="1">Sulfate adenylate transferase</fullName>
        <shortName evidence="1">SAT</shortName>
    </alternativeName>
</protein>
<feature type="chain" id="PRO_1000117965" description="Sulfate adenylyltransferase">
    <location>
        <begin position="1"/>
        <end position="424"/>
    </location>
</feature>
<sequence length="424" mass="47140">MSNLIPPHGGKGLVCCLLEGAELEAEKKKAATLPKLNISSRAKGDLIMMGIGGFSPLDGFMTKADWKGVCEDFLLADGTFWPIPVTLDASADDAAKINVGDEIALFDPEREEFMATMKVTEKYEMTEADKIFECEKVFMGEGTPTAEEFWKIAKDDHPGVQMVMNQGEFNLAGPVKVLSEAEYPEEYPGIYQRPAESRAIFEERGWKEIAAMQLRNPMHRSHEYLCKIAIEVCDGCFIHSLIGNLKPGDIPADVRVKCIDALVKNYFVEDKAVQGGYPLDMRYAGPREGLLHATFRQNYGCSRMIIGRDHAGVGDFYGMFEAQTIFDKIPTPEGEGKALLCTPLKIDWTFYCYKCDGMASLRTCPHAKEDRVLLSGTMLRKMLSEGGELPDHFGRDEVVAILREYYEGLTEKVEVKLHGAATGN</sequence>
<gene>
    <name evidence="1" type="primary">sat</name>
    <name type="ordered locus">Dalk_2445</name>
</gene>
<evidence type="ECO:0000255" key="1">
    <source>
        <dbReference type="HAMAP-Rule" id="MF_00066"/>
    </source>
</evidence>
<accession>B8FB52</accession>